<gene>
    <name evidence="1" type="primary">rsmG</name>
    <name type="ordered locus">Sputw3181_4063</name>
</gene>
<comment type="function">
    <text evidence="1">Specifically methylates the N7 position of guanine in position 527 of 16S rRNA.</text>
</comment>
<comment type="catalytic activity">
    <reaction evidence="1">
        <text>guanosine(527) in 16S rRNA + S-adenosyl-L-methionine = N(7)-methylguanosine(527) in 16S rRNA + S-adenosyl-L-homocysteine</text>
        <dbReference type="Rhea" id="RHEA:42732"/>
        <dbReference type="Rhea" id="RHEA-COMP:10209"/>
        <dbReference type="Rhea" id="RHEA-COMP:10210"/>
        <dbReference type="ChEBI" id="CHEBI:57856"/>
        <dbReference type="ChEBI" id="CHEBI:59789"/>
        <dbReference type="ChEBI" id="CHEBI:74269"/>
        <dbReference type="ChEBI" id="CHEBI:74480"/>
        <dbReference type="EC" id="2.1.1.170"/>
    </reaction>
</comment>
<comment type="subcellular location">
    <subcellularLocation>
        <location evidence="1">Cytoplasm</location>
    </subcellularLocation>
</comment>
<comment type="similarity">
    <text evidence="1">Belongs to the methyltransferase superfamily. RNA methyltransferase RsmG family.</text>
</comment>
<evidence type="ECO:0000255" key="1">
    <source>
        <dbReference type="HAMAP-Rule" id="MF_00074"/>
    </source>
</evidence>
<dbReference type="EC" id="2.1.1.170" evidence="1"/>
<dbReference type="EMBL" id="CP000503">
    <property type="protein sequence ID" value="ABM26865.1"/>
    <property type="molecule type" value="Genomic_DNA"/>
</dbReference>
<dbReference type="RefSeq" id="WP_011791286.1">
    <property type="nucleotide sequence ID" value="NC_008750.1"/>
</dbReference>
<dbReference type="SMR" id="A1RQC0"/>
<dbReference type="GeneID" id="67445471"/>
<dbReference type="KEGG" id="shw:Sputw3181_4063"/>
<dbReference type="HOGENOM" id="CLU_065341_2_0_6"/>
<dbReference type="Proteomes" id="UP000002597">
    <property type="component" value="Chromosome"/>
</dbReference>
<dbReference type="GO" id="GO:0005829">
    <property type="term" value="C:cytosol"/>
    <property type="evidence" value="ECO:0007669"/>
    <property type="project" value="TreeGrafter"/>
</dbReference>
<dbReference type="GO" id="GO:0070043">
    <property type="term" value="F:rRNA (guanine-N7-)-methyltransferase activity"/>
    <property type="evidence" value="ECO:0007669"/>
    <property type="project" value="UniProtKB-UniRule"/>
</dbReference>
<dbReference type="CDD" id="cd02440">
    <property type="entry name" value="AdoMet_MTases"/>
    <property type="match status" value="1"/>
</dbReference>
<dbReference type="FunFam" id="3.40.50.150:FF:000032">
    <property type="entry name" value="Ribosomal RNA small subunit methyltransferase G"/>
    <property type="match status" value="1"/>
</dbReference>
<dbReference type="Gene3D" id="3.40.50.150">
    <property type="entry name" value="Vaccinia Virus protein VP39"/>
    <property type="match status" value="1"/>
</dbReference>
<dbReference type="HAMAP" id="MF_00074">
    <property type="entry name" value="16SrRNA_methyltr_G"/>
    <property type="match status" value="1"/>
</dbReference>
<dbReference type="InterPro" id="IPR003682">
    <property type="entry name" value="rRNA_ssu_MeTfrase_G"/>
</dbReference>
<dbReference type="InterPro" id="IPR029063">
    <property type="entry name" value="SAM-dependent_MTases_sf"/>
</dbReference>
<dbReference type="NCBIfam" id="TIGR00138">
    <property type="entry name" value="rsmG_gidB"/>
    <property type="match status" value="1"/>
</dbReference>
<dbReference type="PANTHER" id="PTHR31760">
    <property type="entry name" value="S-ADENOSYL-L-METHIONINE-DEPENDENT METHYLTRANSFERASES SUPERFAMILY PROTEIN"/>
    <property type="match status" value="1"/>
</dbReference>
<dbReference type="PANTHER" id="PTHR31760:SF0">
    <property type="entry name" value="S-ADENOSYL-L-METHIONINE-DEPENDENT METHYLTRANSFERASES SUPERFAMILY PROTEIN"/>
    <property type="match status" value="1"/>
</dbReference>
<dbReference type="Pfam" id="PF02527">
    <property type="entry name" value="GidB"/>
    <property type="match status" value="1"/>
</dbReference>
<dbReference type="PIRSF" id="PIRSF003078">
    <property type="entry name" value="GidB"/>
    <property type="match status" value="1"/>
</dbReference>
<dbReference type="SUPFAM" id="SSF53335">
    <property type="entry name" value="S-adenosyl-L-methionine-dependent methyltransferases"/>
    <property type="match status" value="1"/>
</dbReference>
<reference key="1">
    <citation type="submission" date="2006-12" db="EMBL/GenBank/DDBJ databases">
        <title>Complete sequence of Shewanella sp. W3-18-1.</title>
        <authorList>
            <consortium name="US DOE Joint Genome Institute"/>
            <person name="Copeland A."/>
            <person name="Lucas S."/>
            <person name="Lapidus A."/>
            <person name="Barry K."/>
            <person name="Detter J.C."/>
            <person name="Glavina del Rio T."/>
            <person name="Hammon N."/>
            <person name="Israni S."/>
            <person name="Dalin E."/>
            <person name="Tice H."/>
            <person name="Pitluck S."/>
            <person name="Chain P."/>
            <person name="Malfatti S."/>
            <person name="Shin M."/>
            <person name="Vergez L."/>
            <person name="Schmutz J."/>
            <person name="Larimer F."/>
            <person name="Land M."/>
            <person name="Hauser L."/>
            <person name="Kyrpides N."/>
            <person name="Lykidis A."/>
            <person name="Tiedje J."/>
            <person name="Richardson P."/>
        </authorList>
    </citation>
    <scope>NUCLEOTIDE SEQUENCE [LARGE SCALE GENOMIC DNA]</scope>
    <source>
        <strain>W3-18-1</strain>
    </source>
</reference>
<accession>A1RQC0</accession>
<keyword id="KW-0963">Cytoplasm</keyword>
<keyword id="KW-0489">Methyltransferase</keyword>
<keyword id="KW-0698">rRNA processing</keyword>
<keyword id="KW-0949">S-adenosyl-L-methionine</keyword>
<keyword id="KW-0808">Transferase</keyword>
<feature type="chain" id="PRO_1000010206" description="Ribosomal RNA small subunit methyltransferase G">
    <location>
        <begin position="1"/>
        <end position="206"/>
    </location>
</feature>
<feature type="binding site" evidence="1">
    <location>
        <position position="74"/>
    </location>
    <ligand>
        <name>S-adenosyl-L-methionine</name>
        <dbReference type="ChEBI" id="CHEBI:59789"/>
    </ligand>
</feature>
<feature type="binding site" evidence="1">
    <location>
        <position position="79"/>
    </location>
    <ligand>
        <name>S-adenosyl-L-methionine</name>
        <dbReference type="ChEBI" id="CHEBI:59789"/>
    </ligand>
</feature>
<feature type="binding site" evidence="1">
    <location>
        <begin position="125"/>
        <end position="126"/>
    </location>
    <ligand>
        <name>S-adenosyl-L-methionine</name>
        <dbReference type="ChEBI" id="CHEBI:59789"/>
    </ligand>
</feature>
<feature type="binding site" evidence="1">
    <location>
        <position position="140"/>
    </location>
    <ligand>
        <name>S-adenosyl-L-methionine</name>
        <dbReference type="ChEBI" id="CHEBI:59789"/>
    </ligand>
</feature>
<protein>
    <recommendedName>
        <fullName evidence="1">Ribosomal RNA small subunit methyltransferase G</fullName>
        <ecNumber evidence="1">2.1.1.170</ecNumber>
    </recommendedName>
    <alternativeName>
        <fullName evidence="1">16S rRNA 7-methylguanosine methyltransferase</fullName>
        <shortName evidence="1">16S rRNA m7G methyltransferase</shortName>
    </alternativeName>
</protein>
<sequence>MLSAQLEAYLAEINLSATAEQKKQLIDFVGMLNKWNKAYNLTSVRDPEAMLVRHIMDSLVVSKHLQGERFIDVGTGPGLPGIPLAIMNPNKTFVLLDSLGKRIRFQKQVAFELGIRNISSVESRVEAYQAEQQFDGVLSRAFASIQDMLSWCHHLPAENGLFYALKGQLNDEELQQMPSGFVIKEIIELKVPKLDEQRHLLKIIKE</sequence>
<organism>
    <name type="scientific">Shewanella sp. (strain W3-18-1)</name>
    <dbReference type="NCBI Taxonomy" id="351745"/>
    <lineage>
        <taxon>Bacteria</taxon>
        <taxon>Pseudomonadati</taxon>
        <taxon>Pseudomonadota</taxon>
        <taxon>Gammaproteobacteria</taxon>
        <taxon>Alteromonadales</taxon>
        <taxon>Shewanellaceae</taxon>
        <taxon>Shewanella</taxon>
    </lineage>
</organism>
<name>RSMG_SHESW</name>
<proteinExistence type="inferred from homology"/>